<proteinExistence type="inferred from homology"/>
<sequence length="166" mass="18223">MSQRPNPSALIWLLLSALVIGLDQWSKAWVLSSLPEYTSVPVIDGFWNWYRTYNTGAAFSFLSDAGGWQLWFFTALAMGISGLLAFWLSRTARGHWRSALPYALVIGGAIGNVIDRLMHGHVVDFIQWYIGSHTWPSFNIADSAIVGGAIGIAVFGLFDKAGKQAS</sequence>
<comment type="function">
    <text evidence="1">This protein specifically catalyzes the removal of signal peptides from prolipoproteins.</text>
</comment>
<comment type="catalytic activity">
    <reaction evidence="1">
        <text>Release of signal peptides from bacterial membrane prolipoproteins. Hydrolyzes -Xaa-Yaa-Zaa-|-(S,diacylglyceryl)Cys-, in which Xaa is hydrophobic (preferably Leu), and Yaa (Ala or Ser) and Zaa (Gly or Ala) have small, neutral side chains.</text>
        <dbReference type="EC" id="3.4.23.36"/>
    </reaction>
</comment>
<comment type="pathway">
    <text evidence="1">Protein modification; lipoprotein biosynthesis (signal peptide cleavage).</text>
</comment>
<comment type="subcellular location">
    <subcellularLocation>
        <location evidence="1">Cell inner membrane</location>
        <topology evidence="1">Multi-pass membrane protein</topology>
    </subcellularLocation>
</comment>
<comment type="similarity">
    <text evidence="1">Belongs to the peptidase A8 family.</text>
</comment>
<protein>
    <recommendedName>
        <fullName evidence="1">Lipoprotein signal peptidase</fullName>
        <ecNumber evidence="1">3.4.23.36</ecNumber>
    </recommendedName>
    <alternativeName>
        <fullName evidence="1">Prolipoprotein signal peptidase</fullName>
    </alternativeName>
    <alternativeName>
        <fullName evidence="1">Signal peptidase II</fullName>
        <shortName evidence="1">SPase II</shortName>
    </alternativeName>
</protein>
<evidence type="ECO:0000255" key="1">
    <source>
        <dbReference type="HAMAP-Rule" id="MF_00161"/>
    </source>
</evidence>
<feature type="chain" id="PRO_1000097285" description="Lipoprotein signal peptidase">
    <location>
        <begin position="1"/>
        <end position="166"/>
    </location>
</feature>
<feature type="transmembrane region" description="Helical" evidence="1">
    <location>
        <begin position="10"/>
        <end position="30"/>
    </location>
</feature>
<feature type="transmembrane region" description="Helical" evidence="1">
    <location>
        <begin position="68"/>
        <end position="88"/>
    </location>
</feature>
<feature type="transmembrane region" description="Helical" evidence="1">
    <location>
        <begin position="94"/>
        <end position="114"/>
    </location>
</feature>
<feature type="transmembrane region" description="Helical" evidence="1">
    <location>
        <begin position="138"/>
        <end position="158"/>
    </location>
</feature>
<feature type="active site" evidence="1">
    <location>
        <position position="124"/>
    </location>
</feature>
<feature type="active site" evidence="1">
    <location>
        <position position="142"/>
    </location>
</feature>
<reference key="1">
    <citation type="journal article" date="2008" name="BMC Genomics">
        <title>Genome sequence and rapid evolution of the rice pathogen Xanthomonas oryzae pv. oryzae PXO99A.</title>
        <authorList>
            <person name="Salzberg S.L."/>
            <person name="Sommer D.D."/>
            <person name="Schatz M.C."/>
            <person name="Phillippy A.M."/>
            <person name="Rabinowicz P.D."/>
            <person name="Tsuge S."/>
            <person name="Furutani A."/>
            <person name="Ochiai H."/>
            <person name="Delcher A.L."/>
            <person name="Kelley D."/>
            <person name="Madupu R."/>
            <person name="Puiu D."/>
            <person name="Radune D."/>
            <person name="Shumway M."/>
            <person name="Trapnell C."/>
            <person name="Aparna G."/>
            <person name="Jha G."/>
            <person name="Pandey A."/>
            <person name="Patil P.B."/>
            <person name="Ishihara H."/>
            <person name="Meyer D.F."/>
            <person name="Szurek B."/>
            <person name="Verdier V."/>
            <person name="Koebnik R."/>
            <person name="Dow J.M."/>
            <person name="Ryan R.P."/>
            <person name="Hirata H."/>
            <person name="Tsuyumu S."/>
            <person name="Won Lee S."/>
            <person name="Seo Y.-S."/>
            <person name="Sriariyanum M."/>
            <person name="Ronald P.C."/>
            <person name="Sonti R.V."/>
            <person name="Van Sluys M.-A."/>
            <person name="Leach J.E."/>
            <person name="White F.F."/>
            <person name="Bogdanove A.J."/>
        </authorList>
    </citation>
    <scope>NUCLEOTIDE SEQUENCE [LARGE SCALE GENOMIC DNA]</scope>
    <source>
        <strain>PXO99A</strain>
    </source>
</reference>
<name>LSPA_XANOP</name>
<keyword id="KW-0064">Aspartyl protease</keyword>
<keyword id="KW-0997">Cell inner membrane</keyword>
<keyword id="KW-1003">Cell membrane</keyword>
<keyword id="KW-0378">Hydrolase</keyword>
<keyword id="KW-0472">Membrane</keyword>
<keyword id="KW-0645">Protease</keyword>
<keyword id="KW-0812">Transmembrane</keyword>
<keyword id="KW-1133">Transmembrane helix</keyword>
<gene>
    <name evidence="1" type="primary">lspA</name>
    <name type="ordered locus">PXO_05536</name>
</gene>
<organism>
    <name type="scientific">Xanthomonas oryzae pv. oryzae (strain PXO99A)</name>
    <dbReference type="NCBI Taxonomy" id="360094"/>
    <lineage>
        <taxon>Bacteria</taxon>
        <taxon>Pseudomonadati</taxon>
        <taxon>Pseudomonadota</taxon>
        <taxon>Gammaproteobacteria</taxon>
        <taxon>Lysobacterales</taxon>
        <taxon>Lysobacteraceae</taxon>
        <taxon>Xanthomonas</taxon>
    </lineage>
</organism>
<accession>B2STC5</accession>
<dbReference type="EC" id="3.4.23.36" evidence="1"/>
<dbReference type="EMBL" id="CP000967">
    <property type="protein sequence ID" value="ACD58170.1"/>
    <property type="molecule type" value="Genomic_DNA"/>
</dbReference>
<dbReference type="RefSeq" id="WP_011408096.1">
    <property type="nucleotide sequence ID" value="NC_010717.2"/>
</dbReference>
<dbReference type="SMR" id="B2STC5"/>
<dbReference type="KEGG" id="xop:PXO_05536"/>
<dbReference type="eggNOG" id="COG0597">
    <property type="taxonomic scope" value="Bacteria"/>
</dbReference>
<dbReference type="HOGENOM" id="CLU_083252_4_0_6"/>
<dbReference type="UniPathway" id="UPA00665"/>
<dbReference type="Proteomes" id="UP000001740">
    <property type="component" value="Chromosome"/>
</dbReference>
<dbReference type="GO" id="GO:0005886">
    <property type="term" value="C:plasma membrane"/>
    <property type="evidence" value="ECO:0007669"/>
    <property type="project" value="UniProtKB-SubCell"/>
</dbReference>
<dbReference type="GO" id="GO:0004190">
    <property type="term" value="F:aspartic-type endopeptidase activity"/>
    <property type="evidence" value="ECO:0007669"/>
    <property type="project" value="UniProtKB-UniRule"/>
</dbReference>
<dbReference type="GO" id="GO:0006508">
    <property type="term" value="P:proteolysis"/>
    <property type="evidence" value="ECO:0007669"/>
    <property type="project" value="UniProtKB-KW"/>
</dbReference>
<dbReference type="HAMAP" id="MF_00161">
    <property type="entry name" value="LspA"/>
    <property type="match status" value="1"/>
</dbReference>
<dbReference type="InterPro" id="IPR001872">
    <property type="entry name" value="Peptidase_A8"/>
</dbReference>
<dbReference type="NCBIfam" id="TIGR00077">
    <property type="entry name" value="lspA"/>
    <property type="match status" value="1"/>
</dbReference>
<dbReference type="PANTHER" id="PTHR33695">
    <property type="entry name" value="LIPOPROTEIN SIGNAL PEPTIDASE"/>
    <property type="match status" value="1"/>
</dbReference>
<dbReference type="PANTHER" id="PTHR33695:SF1">
    <property type="entry name" value="LIPOPROTEIN SIGNAL PEPTIDASE"/>
    <property type="match status" value="1"/>
</dbReference>
<dbReference type="Pfam" id="PF01252">
    <property type="entry name" value="Peptidase_A8"/>
    <property type="match status" value="1"/>
</dbReference>
<dbReference type="PRINTS" id="PR00781">
    <property type="entry name" value="LIPOSIGPTASE"/>
</dbReference>
<dbReference type="PROSITE" id="PS00855">
    <property type="entry name" value="SPASE_II"/>
    <property type="match status" value="1"/>
</dbReference>